<dbReference type="EMBL" id="BC105138">
    <property type="protein sequence ID" value="AAI05139.1"/>
    <property type="molecule type" value="mRNA"/>
</dbReference>
<dbReference type="RefSeq" id="NP_001029490.1">
    <property type="nucleotide sequence ID" value="NM_001034318.1"/>
</dbReference>
<dbReference type="RefSeq" id="NP_001421924.1">
    <property type="nucleotide sequence ID" value="NM_001434995.1"/>
</dbReference>
<dbReference type="RefSeq" id="XP_005221227.1">
    <property type="nucleotide sequence ID" value="XM_005221170.4"/>
</dbReference>
<dbReference type="RefSeq" id="XP_005221228.1">
    <property type="nucleotide sequence ID" value="XM_005221171.2"/>
</dbReference>
<dbReference type="RefSeq" id="XP_005221229.1">
    <property type="nucleotide sequence ID" value="XM_005221172.2"/>
</dbReference>
<dbReference type="BMRB" id="Q3MHR5"/>
<dbReference type="SMR" id="Q3MHR5"/>
<dbReference type="FunCoup" id="Q3MHR5">
    <property type="interactions" value="3703"/>
</dbReference>
<dbReference type="STRING" id="9913.ENSBTAP00000024299"/>
<dbReference type="PaxDb" id="9913-ENSBTAP00000024299"/>
<dbReference type="PeptideAtlas" id="Q3MHR5"/>
<dbReference type="Ensembl" id="ENSBTAT00000024299.4">
    <property type="protein sequence ID" value="ENSBTAP00000024299.3"/>
    <property type="gene ID" value="ENSBTAG00000018258.5"/>
</dbReference>
<dbReference type="GeneID" id="508312"/>
<dbReference type="KEGG" id="bta:508312"/>
<dbReference type="CTD" id="6427"/>
<dbReference type="VEuPathDB" id="HostDB:ENSBTAG00000018258"/>
<dbReference type="VGNC" id="VGNC:55875">
    <property type="gene designation" value="SRSF2"/>
</dbReference>
<dbReference type="eggNOG" id="KOG4207">
    <property type="taxonomic scope" value="Eukaryota"/>
</dbReference>
<dbReference type="GeneTree" id="ENSGT00940000154883"/>
<dbReference type="HOGENOM" id="CLU_012062_10_3_1"/>
<dbReference type="InParanoid" id="Q3MHR5"/>
<dbReference type="OMA" id="PLIRCDV"/>
<dbReference type="OrthoDB" id="8093034at2759"/>
<dbReference type="TreeFam" id="TF106262"/>
<dbReference type="Reactome" id="R-BTA-159236">
    <property type="pathway name" value="Transport of Mature mRNA derived from an Intron-Containing Transcript"/>
</dbReference>
<dbReference type="Reactome" id="R-BTA-72163">
    <property type="pathway name" value="mRNA Splicing - Major Pathway"/>
</dbReference>
<dbReference type="Reactome" id="R-BTA-72165">
    <property type="pathway name" value="mRNA Splicing - Minor Pathway"/>
</dbReference>
<dbReference type="Reactome" id="R-BTA-72187">
    <property type="pathway name" value="mRNA 3'-end processing"/>
</dbReference>
<dbReference type="Reactome" id="R-BTA-72203">
    <property type="pathway name" value="Processing of Capped Intron-Containing Pre-mRNA"/>
</dbReference>
<dbReference type="Reactome" id="R-BTA-73856">
    <property type="pathway name" value="RNA Polymerase II Transcription Termination"/>
</dbReference>
<dbReference type="Proteomes" id="UP000009136">
    <property type="component" value="Chromosome 19"/>
</dbReference>
<dbReference type="Bgee" id="ENSBTAG00000018258">
    <property type="expression patterns" value="Expressed in retropharyngeal lymph node and 106 other cell types or tissues"/>
</dbReference>
<dbReference type="GO" id="GO:0005829">
    <property type="term" value="C:cytosol"/>
    <property type="evidence" value="ECO:0007669"/>
    <property type="project" value="Ensembl"/>
</dbReference>
<dbReference type="GO" id="GO:0016607">
    <property type="term" value="C:nuclear speck"/>
    <property type="evidence" value="ECO:0000318"/>
    <property type="project" value="GO_Central"/>
</dbReference>
<dbReference type="GO" id="GO:0005681">
    <property type="term" value="C:spliceosomal complex"/>
    <property type="evidence" value="ECO:0007669"/>
    <property type="project" value="Ensembl"/>
</dbReference>
<dbReference type="GO" id="GO:0036002">
    <property type="term" value="F:pre-mRNA binding"/>
    <property type="evidence" value="ECO:0007669"/>
    <property type="project" value="Ensembl"/>
</dbReference>
<dbReference type="GO" id="GO:0003723">
    <property type="term" value="F:RNA binding"/>
    <property type="evidence" value="ECO:0000318"/>
    <property type="project" value="GO_Central"/>
</dbReference>
<dbReference type="GO" id="GO:0006397">
    <property type="term" value="P:mRNA processing"/>
    <property type="evidence" value="ECO:0007669"/>
    <property type="project" value="UniProtKB-KW"/>
</dbReference>
<dbReference type="GO" id="GO:0000381">
    <property type="term" value="P:regulation of alternative mRNA splicing, via spliceosome"/>
    <property type="evidence" value="ECO:0000318"/>
    <property type="project" value="GO_Central"/>
</dbReference>
<dbReference type="GO" id="GO:0008380">
    <property type="term" value="P:RNA splicing"/>
    <property type="evidence" value="ECO:0007669"/>
    <property type="project" value="UniProtKB-KW"/>
</dbReference>
<dbReference type="CDD" id="cd12311">
    <property type="entry name" value="RRM_SRSF2_SRSF8"/>
    <property type="match status" value="1"/>
</dbReference>
<dbReference type="FunFam" id="3.30.70.330:FF:000308">
    <property type="entry name" value="Serine/arginine-rich splicing factor 2"/>
    <property type="match status" value="1"/>
</dbReference>
<dbReference type="Gene3D" id="3.30.70.330">
    <property type="match status" value="1"/>
</dbReference>
<dbReference type="InterPro" id="IPR012677">
    <property type="entry name" value="Nucleotide-bd_a/b_plait_sf"/>
</dbReference>
<dbReference type="InterPro" id="IPR035979">
    <property type="entry name" value="RBD_domain_sf"/>
</dbReference>
<dbReference type="InterPro" id="IPR051106">
    <property type="entry name" value="RNA-bind/splicing_reg"/>
</dbReference>
<dbReference type="InterPro" id="IPR000504">
    <property type="entry name" value="RRM_dom"/>
</dbReference>
<dbReference type="InterPro" id="IPR003954">
    <property type="entry name" value="RRM_dom_euk"/>
</dbReference>
<dbReference type="PANTHER" id="PTHR48028">
    <property type="entry name" value="GLYCINE-RICH RNA-BINDING PROTEIN RZ1A"/>
    <property type="match status" value="1"/>
</dbReference>
<dbReference type="PANTHER" id="PTHR48028:SF4">
    <property type="entry name" value="SC35-LIKE SPLICING FACTOR"/>
    <property type="match status" value="1"/>
</dbReference>
<dbReference type="Pfam" id="PF00076">
    <property type="entry name" value="RRM_1"/>
    <property type="match status" value="1"/>
</dbReference>
<dbReference type="SMART" id="SM00360">
    <property type="entry name" value="RRM"/>
    <property type="match status" value="1"/>
</dbReference>
<dbReference type="SMART" id="SM00361">
    <property type="entry name" value="RRM_1"/>
    <property type="match status" value="1"/>
</dbReference>
<dbReference type="SUPFAM" id="SSF54928">
    <property type="entry name" value="RNA-binding domain, RBD"/>
    <property type="match status" value="1"/>
</dbReference>
<dbReference type="PROSITE" id="PS50102">
    <property type="entry name" value="RRM"/>
    <property type="match status" value="1"/>
</dbReference>
<protein>
    <recommendedName>
        <fullName>Serine/arginine-rich splicing factor 2</fullName>
    </recommendedName>
    <alternativeName>
        <fullName>Splicing component, 35 kDa</fullName>
    </alternativeName>
    <alternativeName>
        <fullName>Splicing factor SC35</fullName>
        <shortName>SC-35</shortName>
    </alternativeName>
    <alternativeName>
        <fullName>Splicing factor, arginine/serine-rich 2</fullName>
    </alternativeName>
</protein>
<keyword id="KW-0007">Acetylation</keyword>
<keyword id="KW-0507">mRNA processing</keyword>
<keyword id="KW-0508">mRNA splicing</keyword>
<keyword id="KW-0539">Nucleus</keyword>
<keyword id="KW-0597">Phosphoprotein</keyword>
<keyword id="KW-1185">Reference proteome</keyword>
<keyword id="KW-0694">RNA-binding</keyword>
<organism>
    <name type="scientific">Bos taurus</name>
    <name type="common">Bovine</name>
    <dbReference type="NCBI Taxonomy" id="9913"/>
    <lineage>
        <taxon>Eukaryota</taxon>
        <taxon>Metazoa</taxon>
        <taxon>Chordata</taxon>
        <taxon>Craniata</taxon>
        <taxon>Vertebrata</taxon>
        <taxon>Euteleostomi</taxon>
        <taxon>Mammalia</taxon>
        <taxon>Eutheria</taxon>
        <taxon>Laurasiatheria</taxon>
        <taxon>Artiodactyla</taxon>
        <taxon>Ruminantia</taxon>
        <taxon>Pecora</taxon>
        <taxon>Bovidae</taxon>
        <taxon>Bovinae</taxon>
        <taxon>Bos</taxon>
    </lineage>
</organism>
<gene>
    <name type="primary">SRSF2</name>
    <name type="synonym">SFRS2</name>
</gene>
<sequence>MSYGRPPPDVEGMTSLKVDNLTYRTSPDTLRRVFEKYGRVGDVYIPRDRYTKESRGFAFVRFHDKRDAEDAMDAMDGAVLDGRELRVQMARYGRPPDSHHSRRGPPPRRYGGGGYGRRSRSPRRRRRSRSRSRSRSRSRSRSRYSRSKSRSRTRSRSRSTSKSRSARRSKSKSSSVSRSRSRSRSRSRSRSPPPVSKRESKSRSRSKSPPKSPEEEGAVSS</sequence>
<comment type="function">
    <text evidence="1">Necessary for the splicing of pre-mRNA. It is required for formation of the earliest ATP-dependent splicing complex and interacts with spliceosomal components bound to both the 5'- and 3'-splice sites during spliceosome assembly. It also is required for ATP-dependent interactions of both U1 and U2 snRNPs with pre-mRNA. Interacts with other spliceosomal components, via the RS domains, to form a bridge between the 5'- and 3'-splice site binding components, U1 snRNP and U2AF. Binds to purine-rich RNA sequences, either 5'-AGSAGAGTA-3' (S=C or G) or 5'-GTTCGAGTA-3'. Can bind to beta-globin mRNA and commit it to the splicing pathway. The phosphorylated form (by SRPK2) is required for cellular apoptosis in response to cisplatin treatment (By similarity).</text>
</comment>
<comment type="subunit">
    <text evidence="1">In vitro, self-associates and binds SRSF1/SFRS1 (ASF/SF2), SNRNP70 and U2AF1 but not U2AF2. Binds SREK1/SFRS12. Interacts with CCNL1 and CCNL2. Interacts with SCAF11. Interacts with ZRSR2/U2AF1-RS2. Interacts with CCDC55 (via C-terminus). Interacts with BRDT (By similarity).</text>
</comment>
<comment type="subcellular location">
    <subcellularLocation>
        <location evidence="1">Nucleus</location>
    </subcellularLocation>
    <subcellularLocation>
        <location evidence="1">Nucleus</location>
        <location evidence="1">Nucleoplasm</location>
    </subcellularLocation>
    <subcellularLocation>
        <location evidence="1">Nucleus speckle</location>
    </subcellularLocation>
    <text evidence="1">Phosphorylation by SRPK2 provokes its redistribution from the nuclear speckle to nucleoplasm.</text>
</comment>
<comment type="PTM">
    <text evidence="1">Extensively phosphorylated on serine residues in the RS domain. Phosphorylated by SRPK2 and this causes its redistribution from the nuclear speckle to nucleoplasm and controls cell fate decision in response to cisplatin treatment. KAT5/TIP60 inhibits its phosphorylation by preventing SRPK2 nuclear translocation (By similarity).</text>
</comment>
<comment type="PTM">
    <text evidence="1">Acetylation on Lys-52 by KAT5/TIP60 promotes its proteasomal degradation. This effect is counterbalanced by HDAC6, which positively controls SRSF2 protein level by deacetylating it and preventing its proteasomal degradation (By similarity).</text>
</comment>
<comment type="similarity">
    <text evidence="5">Belongs to the splicing factor SR family.</text>
</comment>
<feature type="initiator methionine" description="Removed" evidence="2">
    <location>
        <position position="1"/>
    </location>
</feature>
<feature type="chain" id="PRO_0000245578" description="Serine/arginine-rich splicing factor 2">
    <location>
        <begin position="2"/>
        <end position="221"/>
    </location>
</feature>
<feature type="domain" description="RRM" evidence="3">
    <location>
        <begin position="14"/>
        <end position="92"/>
    </location>
</feature>
<feature type="region of interest" description="Disordered" evidence="4">
    <location>
        <begin position="92"/>
        <end position="221"/>
    </location>
</feature>
<feature type="compositionally biased region" description="Basic residues" evidence="4">
    <location>
        <begin position="117"/>
        <end position="171"/>
    </location>
</feature>
<feature type="compositionally biased region" description="Basic residues" evidence="4">
    <location>
        <begin position="179"/>
        <end position="189"/>
    </location>
</feature>
<feature type="modified residue" description="N-acetylserine" evidence="2">
    <location>
        <position position="2"/>
    </location>
</feature>
<feature type="modified residue" description="Phosphoserine" evidence="2">
    <location>
        <position position="2"/>
    </location>
</feature>
<feature type="modified residue" description="Phosphothreonine" evidence="2">
    <location>
        <position position="22"/>
    </location>
</feature>
<feature type="modified residue" description="Phosphothreonine" evidence="2">
    <location>
        <position position="25"/>
    </location>
</feature>
<feature type="modified residue" description="Phosphoserine" evidence="2">
    <location>
        <position position="26"/>
    </location>
</feature>
<feature type="modified residue" description="N6-acetyllysine" evidence="2">
    <location>
        <position position="52"/>
    </location>
</feature>
<feature type="modified residue" description="Phosphoserine" evidence="2">
    <location>
        <position position="189"/>
    </location>
</feature>
<feature type="modified residue" description="Phosphoserine" evidence="2">
    <location>
        <position position="191"/>
    </location>
</feature>
<feature type="modified residue" description="Phosphoserine" evidence="2">
    <location>
        <position position="204"/>
    </location>
</feature>
<feature type="modified residue" description="Phosphoserine" evidence="2">
    <location>
        <position position="206"/>
    </location>
</feature>
<feature type="modified residue" description="Phosphoserine" evidence="2">
    <location>
        <position position="208"/>
    </location>
</feature>
<feature type="modified residue" description="Phosphoserine" evidence="2">
    <location>
        <position position="212"/>
    </location>
</feature>
<feature type="modified residue" description="Phosphoserine" evidence="2">
    <location>
        <position position="220"/>
    </location>
</feature>
<proteinExistence type="evidence at transcript level"/>
<accession>Q3MHR5</accession>
<evidence type="ECO:0000250" key="1"/>
<evidence type="ECO:0000250" key="2">
    <source>
        <dbReference type="UniProtKB" id="Q01130"/>
    </source>
</evidence>
<evidence type="ECO:0000255" key="3">
    <source>
        <dbReference type="PROSITE-ProRule" id="PRU00176"/>
    </source>
</evidence>
<evidence type="ECO:0000256" key="4">
    <source>
        <dbReference type="SAM" id="MobiDB-lite"/>
    </source>
</evidence>
<evidence type="ECO:0000305" key="5"/>
<name>SRSF2_BOVIN</name>
<reference key="1">
    <citation type="submission" date="2005-09" db="EMBL/GenBank/DDBJ databases">
        <authorList>
            <consortium name="NIH - Mammalian Gene Collection (MGC) project"/>
        </authorList>
    </citation>
    <scope>NUCLEOTIDE SEQUENCE [LARGE SCALE MRNA]</scope>
    <source>
        <strain>Crossbred X Angus</strain>
        <tissue>Ileum</tissue>
    </source>
</reference>